<keyword id="KW-0249">Electron transport</keyword>
<keyword id="KW-0472">Membrane</keyword>
<keyword id="KW-0496">Mitochondrion</keyword>
<keyword id="KW-0520">NAD</keyword>
<keyword id="KW-0679">Respiratory chain</keyword>
<keyword id="KW-1278">Translocase</keyword>
<keyword id="KW-0812">Transmembrane</keyword>
<keyword id="KW-1133">Transmembrane helix</keyword>
<keyword id="KW-0813">Transport</keyword>
<keyword id="KW-0830">Ubiquinone</keyword>
<dbReference type="EC" id="7.1.1.2"/>
<dbReference type="EMBL" id="Z48930">
    <property type="protein sequence ID" value="CAA88767.1"/>
    <property type="molecule type" value="Genomic_DNA"/>
</dbReference>
<dbReference type="PIR" id="S62757">
    <property type="entry name" value="S62757"/>
</dbReference>
<dbReference type="SMR" id="P48925"/>
<dbReference type="GO" id="GO:0031966">
    <property type="term" value="C:mitochondrial membrane"/>
    <property type="evidence" value="ECO:0007669"/>
    <property type="project" value="UniProtKB-SubCell"/>
</dbReference>
<dbReference type="GO" id="GO:0008137">
    <property type="term" value="F:NADH dehydrogenase (ubiquinone) activity"/>
    <property type="evidence" value="ECO:0007669"/>
    <property type="project" value="UniProtKB-EC"/>
</dbReference>
<dbReference type="Gene3D" id="1.20.120.1200">
    <property type="entry name" value="NADH-ubiquinone/plastoquinone oxidoreductase chain 6, subunit NuoJ"/>
    <property type="match status" value="1"/>
</dbReference>
<dbReference type="InterPro" id="IPR001457">
    <property type="entry name" value="NADH_UbQ/plastoQ_OxRdtase_su6"/>
</dbReference>
<dbReference type="InterPro" id="IPR042106">
    <property type="entry name" value="Nuo/plastoQ_OxRdtase_6_NuoJ"/>
</dbReference>
<dbReference type="NCBIfam" id="NF005164">
    <property type="entry name" value="PRK06638.1-4"/>
    <property type="match status" value="1"/>
</dbReference>
<dbReference type="PANTHER" id="PTHR33269">
    <property type="entry name" value="NADH-UBIQUINONE OXIDOREDUCTASE CHAIN 6"/>
    <property type="match status" value="1"/>
</dbReference>
<dbReference type="PANTHER" id="PTHR33269:SF17">
    <property type="entry name" value="NADH-UBIQUINONE OXIDOREDUCTASE CHAIN 6"/>
    <property type="match status" value="1"/>
</dbReference>
<dbReference type="Pfam" id="PF00499">
    <property type="entry name" value="Oxidored_q3"/>
    <property type="match status" value="1"/>
</dbReference>
<protein>
    <recommendedName>
        <fullName>NADH-ubiquinone oxidoreductase chain 6</fullName>
        <ecNumber>7.1.1.2</ecNumber>
    </recommendedName>
    <alternativeName>
        <fullName>NADH dehydrogenase subunit 6</fullName>
    </alternativeName>
</protein>
<feature type="chain" id="PRO_0000118271" description="NADH-ubiquinone oxidoreductase chain 6">
    <location>
        <begin position="1"/>
        <end position="201"/>
    </location>
</feature>
<feature type="transmembrane region" description="Helical" evidence="2">
    <location>
        <begin position="4"/>
        <end position="24"/>
    </location>
</feature>
<feature type="transmembrane region" description="Helical" evidence="2">
    <location>
        <begin position="28"/>
        <end position="48"/>
    </location>
</feature>
<feature type="transmembrane region" description="Helical" evidence="2">
    <location>
        <begin position="55"/>
        <end position="75"/>
    </location>
</feature>
<feature type="transmembrane region" description="Helical" evidence="2">
    <location>
        <begin position="88"/>
        <end position="108"/>
    </location>
</feature>
<feature type="transmembrane region" description="Helical" evidence="2">
    <location>
        <begin position="151"/>
        <end position="171"/>
    </location>
</feature>
<name>NU6M_CYACA</name>
<accession>P48925</accession>
<reference key="1">
    <citation type="thesis" date="1995" institute="Justus Liebig University / Frankfurt" country="Germany">
        <authorList>
            <person name="Viehmann S."/>
        </authorList>
    </citation>
    <scope>NUCLEOTIDE SEQUENCE [GENOMIC DNA]</scope>
    <source>
        <strain>RK-1</strain>
    </source>
</reference>
<sequence>MIKLVLFYFFSGLSLVSASIVISVKNPVFSVVFLILVFFNVVGLLLLLGAEFLSLLFLIVYVGAIAVLFLFVVMILNLKFIELRSSFFYYAFFGSLIMAIFLFEIFIILNSDLTFASSYFLERKRIWVQELYSYTNLQILGNVLYTSYSYLFILSGFVLLVAILGAIILTLYQRSQIRRQDPNVQVVRNFDDTIRFFKFLK</sequence>
<geneLocation type="mitochondrion"/>
<comment type="function">
    <text evidence="1">Core subunit of the mitochondrial membrane respiratory chain NADH dehydrogenase (Complex I) that is believed to belong to the minimal assembly required for catalysis. Complex I functions in the transfer of electrons from NADH to the respiratory chain. The immediate electron acceptor for the enzyme is believed to be ubiquinone (By similarity).</text>
</comment>
<comment type="catalytic activity">
    <reaction>
        <text>a ubiquinone + NADH + 5 H(+)(in) = a ubiquinol + NAD(+) + 4 H(+)(out)</text>
        <dbReference type="Rhea" id="RHEA:29091"/>
        <dbReference type="Rhea" id="RHEA-COMP:9565"/>
        <dbReference type="Rhea" id="RHEA-COMP:9566"/>
        <dbReference type="ChEBI" id="CHEBI:15378"/>
        <dbReference type="ChEBI" id="CHEBI:16389"/>
        <dbReference type="ChEBI" id="CHEBI:17976"/>
        <dbReference type="ChEBI" id="CHEBI:57540"/>
        <dbReference type="ChEBI" id="CHEBI:57945"/>
        <dbReference type="EC" id="7.1.1.2"/>
    </reaction>
</comment>
<comment type="subcellular location">
    <subcellularLocation>
        <location evidence="3">Mitochondrion membrane</location>
        <topology evidence="3">Multi-pass membrane protein</topology>
    </subcellularLocation>
</comment>
<comment type="similarity">
    <text evidence="3">Belongs to the complex I subunit 6 family.</text>
</comment>
<organism>
    <name type="scientific">Cyanidium caldarium</name>
    <name type="common">Red alga</name>
    <dbReference type="NCBI Taxonomy" id="2771"/>
    <lineage>
        <taxon>Eukaryota</taxon>
        <taxon>Rhodophyta</taxon>
        <taxon>Bangiophyceae</taxon>
        <taxon>Cyanidiales</taxon>
        <taxon>Cyanidiaceae</taxon>
        <taxon>Cyanidium</taxon>
    </lineage>
</organism>
<evidence type="ECO:0000250" key="1"/>
<evidence type="ECO:0000255" key="2"/>
<evidence type="ECO:0000305" key="3"/>
<proteinExistence type="inferred from homology"/>
<gene>
    <name type="primary">ND6</name>
    <name type="synonym">NAD6</name>
</gene>